<reference key="1">
    <citation type="submission" date="2006-03" db="EMBL/GenBank/DDBJ databases">
        <title>Complete sequence of Shewanella denitrificans OS217.</title>
        <authorList>
            <consortium name="US DOE Joint Genome Institute"/>
            <person name="Copeland A."/>
            <person name="Lucas S."/>
            <person name="Lapidus A."/>
            <person name="Barry K."/>
            <person name="Detter J.C."/>
            <person name="Glavina del Rio T."/>
            <person name="Hammon N."/>
            <person name="Israni S."/>
            <person name="Dalin E."/>
            <person name="Tice H."/>
            <person name="Pitluck S."/>
            <person name="Brettin T."/>
            <person name="Bruce D."/>
            <person name="Han C."/>
            <person name="Tapia R."/>
            <person name="Gilna P."/>
            <person name="Kiss H."/>
            <person name="Schmutz J."/>
            <person name="Larimer F."/>
            <person name="Land M."/>
            <person name="Hauser L."/>
            <person name="Kyrpides N."/>
            <person name="Lykidis A."/>
            <person name="Richardson P."/>
        </authorList>
    </citation>
    <scope>NUCLEOTIDE SEQUENCE [LARGE SCALE GENOMIC DNA]</scope>
    <source>
        <strain>OS217 / ATCC BAA-1090 / DSM 15013</strain>
    </source>
</reference>
<evidence type="ECO:0000255" key="1">
    <source>
        <dbReference type="HAMAP-Rule" id="MF_00358"/>
    </source>
</evidence>
<evidence type="ECO:0000305" key="2"/>
<proteinExistence type="inferred from homology"/>
<feature type="chain" id="PRO_0000266759" description="Small ribosomal subunit protein bS21">
    <location>
        <begin position="1"/>
        <end position="71"/>
    </location>
</feature>
<dbReference type="EMBL" id="CP000302">
    <property type="protein sequence ID" value="ABE56110.1"/>
    <property type="molecule type" value="Genomic_DNA"/>
</dbReference>
<dbReference type="RefSeq" id="WP_006080725.1">
    <property type="nucleotide sequence ID" value="NC_007954.1"/>
</dbReference>
<dbReference type="SMR" id="Q12KB6"/>
<dbReference type="STRING" id="318161.Sden_2831"/>
<dbReference type="GeneID" id="94729004"/>
<dbReference type="KEGG" id="sdn:Sden_2831"/>
<dbReference type="eggNOG" id="COG0828">
    <property type="taxonomic scope" value="Bacteria"/>
</dbReference>
<dbReference type="HOGENOM" id="CLU_159258_1_0_6"/>
<dbReference type="OrthoDB" id="9799244at2"/>
<dbReference type="Proteomes" id="UP000001982">
    <property type="component" value="Chromosome"/>
</dbReference>
<dbReference type="GO" id="GO:1990904">
    <property type="term" value="C:ribonucleoprotein complex"/>
    <property type="evidence" value="ECO:0007669"/>
    <property type="project" value="UniProtKB-KW"/>
</dbReference>
<dbReference type="GO" id="GO:0005840">
    <property type="term" value="C:ribosome"/>
    <property type="evidence" value="ECO:0007669"/>
    <property type="project" value="UniProtKB-KW"/>
</dbReference>
<dbReference type="GO" id="GO:0003735">
    <property type="term" value="F:structural constituent of ribosome"/>
    <property type="evidence" value="ECO:0007669"/>
    <property type="project" value="InterPro"/>
</dbReference>
<dbReference type="GO" id="GO:0006412">
    <property type="term" value="P:translation"/>
    <property type="evidence" value="ECO:0007669"/>
    <property type="project" value="UniProtKB-UniRule"/>
</dbReference>
<dbReference type="Gene3D" id="1.20.5.1150">
    <property type="entry name" value="Ribosomal protein S8"/>
    <property type="match status" value="1"/>
</dbReference>
<dbReference type="HAMAP" id="MF_00358">
    <property type="entry name" value="Ribosomal_bS21"/>
    <property type="match status" value="1"/>
</dbReference>
<dbReference type="InterPro" id="IPR001911">
    <property type="entry name" value="Ribosomal_bS21"/>
</dbReference>
<dbReference type="InterPro" id="IPR018278">
    <property type="entry name" value="Ribosomal_bS21_CS"/>
</dbReference>
<dbReference type="InterPro" id="IPR038380">
    <property type="entry name" value="Ribosomal_bS21_sf"/>
</dbReference>
<dbReference type="NCBIfam" id="TIGR00030">
    <property type="entry name" value="S21p"/>
    <property type="match status" value="1"/>
</dbReference>
<dbReference type="PANTHER" id="PTHR21109">
    <property type="entry name" value="MITOCHONDRIAL 28S RIBOSOMAL PROTEIN S21"/>
    <property type="match status" value="1"/>
</dbReference>
<dbReference type="PANTHER" id="PTHR21109:SF22">
    <property type="entry name" value="SMALL RIBOSOMAL SUBUNIT PROTEIN BS21"/>
    <property type="match status" value="1"/>
</dbReference>
<dbReference type="Pfam" id="PF01165">
    <property type="entry name" value="Ribosomal_S21"/>
    <property type="match status" value="1"/>
</dbReference>
<dbReference type="PRINTS" id="PR00976">
    <property type="entry name" value="RIBOSOMALS21"/>
</dbReference>
<dbReference type="PROSITE" id="PS01181">
    <property type="entry name" value="RIBOSOMAL_S21"/>
    <property type="match status" value="1"/>
</dbReference>
<accession>Q12KB6</accession>
<comment type="similarity">
    <text evidence="1">Belongs to the bacterial ribosomal protein bS21 family.</text>
</comment>
<keyword id="KW-1185">Reference proteome</keyword>
<keyword id="KW-0687">Ribonucleoprotein</keyword>
<keyword id="KW-0689">Ribosomal protein</keyword>
<gene>
    <name evidence="1" type="primary">rpsU</name>
    <name type="ordered locus">Sden_2831</name>
</gene>
<protein>
    <recommendedName>
        <fullName evidence="1">Small ribosomal subunit protein bS21</fullName>
    </recommendedName>
    <alternativeName>
        <fullName evidence="2">30S ribosomal protein S21</fullName>
    </alternativeName>
</protein>
<name>RS21_SHEDO</name>
<organism>
    <name type="scientific">Shewanella denitrificans (strain OS217 / ATCC BAA-1090 / DSM 15013)</name>
    <dbReference type="NCBI Taxonomy" id="318161"/>
    <lineage>
        <taxon>Bacteria</taxon>
        <taxon>Pseudomonadati</taxon>
        <taxon>Pseudomonadota</taxon>
        <taxon>Gammaproteobacteria</taxon>
        <taxon>Alteromonadales</taxon>
        <taxon>Shewanellaceae</taxon>
        <taxon>Shewanella</taxon>
    </lineage>
</organism>
<sequence>MPIIKVRENEPFDVALRRFKRSCEKAGILADVRAREFYEKPTTARKRAKAAAVKRLAKKLSRENARRVRLY</sequence>